<accession>Q5NI50</accession>
<gene>
    <name evidence="1" type="primary">murC</name>
    <name type="ordered locus">FTT_0239</name>
</gene>
<proteinExistence type="inferred from homology"/>
<feature type="chain" id="PRO_0000182094" description="UDP-N-acetylmuramate--L-alanine ligase">
    <location>
        <begin position="1"/>
        <end position="451"/>
    </location>
</feature>
<feature type="binding site" evidence="1">
    <location>
        <begin position="110"/>
        <end position="116"/>
    </location>
    <ligand>
        <name>ATP</name>
        <dbReference type="ChEBI" id="CHEBI:30616"/>
    </ligand>
</feature>
<comment type="function">
    <text evidence="1">Cell wall formation.</text>
</comment>
<comment type="catalytic activity">
    <reaction evidence="1">
        <text>UDP-N-acetyl-alpha-D-muramate + L-alanine + ATP = UDP-N-acetyl-alpha-D-muramoyl-L-alanine + ADP + phosphate + H(+)</text>
        <dbReference type="Rhea" id="RHEA:23372"/>
        <dbReference type="ChEBI" id="CHEBI:15378"/>
        <dbReference type="ChEBI" id="CHEBI:30616"/>
        <dbReference type="ChEBI" id="CHEBI:43474"/>
        <dbReference type="ChEBI" id="CHEBI:57972"/>
        <dbReference type="ChEBI" id="CHEBI:70757"/>
        <dbReference type="ChEBI" id="CHEBI:83898"/>
        <dbReference type="ChEBI" id="CHEBI:456216"/>
        <dbReference type="EC" id="6.3.2.8"/>
    </reaction>
</comment>
<comment type="pathway">
    <text evidence="1">Cell wall biogenesis; peptidoglycan biosynthesis.</text>
</comment>
<comment type="subcellular location">
    <subcellularLocation>
        <location evidence="1">Cytoplasm</location>
    </subcellularLocation>
</comment>
<comment type="similarity">
    <text evidence="1">Belongs to the MurCDEF family.</text>
</comment>
<sequence length="451" mass="49804">MNKKILFLGVGGIGVSALAIAAKRLGAHVAGYDSVANKLTAKLEALGIVIFTSPNGVDVANFDIVVYSSAILSSHPLLSQARSLGIQCLQRAMFLAVLMKDFSYSIAITGTHGKTTTSSVLATLLCQLDKYSSFIVGGVVKYADSNIQVNGTDKLVIEADESDASFLFLSPQVVIITNIDLDHMATYNNSYQTLLENFTDFVSKESVKSIYLCVDDQGCRDLLAKYNQSDKNVTSYGFSINADVQIYDYHIIDEITHFKIRYKDDDLSFKLQLPGRYNVQNATACIIACLDLGFKYEDIRNALIKVTGVARRFDLYTKVISGHQVTVIDDYGHHPVEVANSISAVRDRYPNKKIIHVFQPHRYTRNRDLIKDWPKALSLADQLILLPTYSADEQIIKGAESQDIVKGLSGYLLADGFDHAIYFLEKLANENTVILIQGAGDVTNLVEILSE</sequence>
<name>MURC_FRATT</name>
<dbReference type="EC" id="6.3.2.8" evidence="1"/>
<dbReference type="EMBL" id="AJ749949">
    <property type="protein sequence ID" value="CAG44872.1"/>
    <property type="molecule type" value="Genomic_DNA"/>
</dbReference>
<dbReference type="RefSeq" id="WP_003021772.1">
    <property type="nucleotide sequence ID" value="NC_006570.2"/>
</dbReference>
<dbReference type="RefSeq" id="YP_169292.1">
    <property type="nucleotide sequence ID" value="NC_006570.2"/>
</dbReference>
<dbReference type="SMR" id="Q5NI50"/>
<dbReference type="STRING" id="177416.FTT_0239"/>
<dbReference type="DNASU" id="3191258"/>
<dbReference type="EnsemblBacteria" id="CAG44872">
    <property type="protein sequence ID" value="CAG44872"/>
    <property type="gene ID" value="FTT_0239"/>
</dbReference>
<dbReference type="KEGG" id="ftu:FTT_0239"/>
<dbReference type="eggNOG" id="COG0773">
    <property type="taxonomic scope" value="Bacteria"/>
</dbReference>
<dbReference type="OrthoDB" id="9804126at2"/>
<dbReference type="UniPathway" id="UPA00219"/>
<dbReference type="Proteomes" id="UP000001174">
    <property type="component" value="Chromosome"/>
</dbReference>
<dbReference type="GO" id="GO:0005737">
    <property type="term" value="C:cytoplasm"/>
    <property type="evidence" value="ECO:0007669"/>
    <property type="project" value="UniProtKB-SubCell"/>
</dbReference>
<dbReference type="GO" id="GO:0005524">
    <property type="term" value="F:ATP binding"/>
    <property type="evidence" value="ECO:0007669"/>
    <property type="project" value="UniProtKB-UniRule"/>
</dbReference>
<dbReference type="GO" id="GO:0008763">
    <property type="term" value="F:UDP-N-acetylmuramate-L-alanine ligase activity"/>
    <property type="evidence" value="ECO:0007669"/>
    <property type="project" value="UniProtKB-UniRule"/>
</dbReference>
<dbReference type="GO" id="GO:0051301">
    <property type="term" value="P:cell division"/>
    <property type="evidence" value="ECO:0007669"/>
    <property type="project" value="UniProtKB-KW"/>
</dbReference>
<dbReference type="GO" id="GO:0071555">
    <property type="term" value="P:cell wall organization"/>
    <property type="evidence" value="ECO:0007669"/>
    <property type="project" value="UniProtKB-KW"/>
</dbReference>
<dbReference type="GO" id="GO:0009252">
    <property type="term" value="P:peptidoglycan biosynthetic process"/>
    <property type="evidence" value="ECO:0007669"/>
    <property type="project" value="UniProtKB-UniRule"/>
</dbReference>
<dbReference type="GO" id="GO:0008360">
    <property type="term" value="P:regulation of cell shape"/>
    <property type="evidence" value="ECO:0007669"/>
    <property type="project" value="UniProtKB-KW"/>
</dbReference>
<dbReference type="Gene3D" id="3.90.190.20">
    <property type="entry name" value="Mur ligase, C-terminal domain"/>
    <property type="match status" value="1"/>
</dbReference>
<dbReference type="Gene3D" id="3.40.1190.10">
    <property type="entry name" value="Mur-like, catalytic domain"/>
    <property type="match status" value="1"/>
</dbReference>
<dbReference type="Gene3D" id="3.40.50.720">
    <property type="entry name" value="NAD(P)-binding Rossmann-like Domain"/>
    <property type="match status" value="1"/>
</dbReference>
<dbReference type="HAMAP" id="MF_00046">
    <property type="entry name" value="MurC"/>
    <property type="match status" value="1"/>
</dbReference>
<dbReference type="InterPro" id="IPR036565">
    <property type="entry name" value="Mur-like_cat_sf"/>
</dbReference>
<dbReference type="InterPro" id="IPR004101">
    <property type="entry name" value="Mur_ligase_C"/>
</dbReference>
<dbReference type="InterPro" id="IPR036615">
    <property type="entry name" value="Mur_ligase_C_dom_sf"/>
</dbReference>
<dbReference type="InterPro" id="IPR013221">
    <property type="entry name" value="Mur_ligase_cen"/>
</dbReference>
<dbReference type="InterPro" id="IPR000713">
    <property type="entry name" value="Mur_ligase_N"/>
</dbReference>
<dbReference type="InterPro" id="IPR050061">
    <property type="entry name" value="MurCDEF_pg_biosynth"/>
</dbReference>
<dbReference type="InterPro" id="IPR005758">
    <property type="entry name" value="UDP-N-AcMur_Ala_ligase_MurC"/>
</dbReference>
<dbReference type="NCBIfam" id="TIGR01082">
    <property type="entry name" value="murC"/>
    <property type="match status" value="1"/>
</dbReference>
<dbReference type="PANTHER" id="PTHR43445:SF3">
    <property type="entry name" value="UDP-N-ACETYLMURAMATE--L-ALANINE LIGASE"/>
    <property type="match status" value="1"/>
</dbReference>
<dbReference type="PANTHER" id="PTHR43445">
    <property type="entry name" value="UDP-N-ACETYLMURAMATE--L-ALANINE LIGASE-RELATED"/>
    <property type="match status" value="1"/>
</dbReference>
<dbReference type="Pfam" id="PF01225">
    <property type="entry name" value="Mur_ligase"/>
    <property type="match status" value="1"/>
</dbReference>
<dbReference type="Pfam" id="PF02875">
    <property type="entry name" value="Mur_ligase_C"/>
    <property type="match status" value="1"/>
</dbReference>
<dbReference type="Pfam" id="PF08245">
    <property type="entry name" value="Mur_ligase_M"/>
    <property type="match status" value="1"/>
</dbReference>
<dbReference type="SUPFAM" id="SSF51984">
    <property type="entry name" value="MurCD N-terminal domain"/>
    <property type="match status" value="1"/>
</dbReference>
<dbReference type="SUPFAM" id="SSF53623">
    <property type="entry name" value="MurD-like peptide ligases, catalytic domain"/>
    <property type="match status" value="1"/>
</dbReference>
<dbReference type="SUPFAM" id="SSF53244">
    <property type="entry name" value="MurD-like peptide ligases, peptide-binding domain"/>
    <property type="match status" value="1"/>
</dbReference>
<keyword id="KW-0067">ATP-binding</keyword>
<keyword id="KW-0131">Cell cycle</keyword>
<keyword id="KW-0132">Cell division</keyword>
<keyword id="KW-0133">Cell shape</keyword>
<keyword id="KW-0961">Cell wall biogenesis/degradation</keyword>
<keyword id="KW-0963">Cytoplasm</keyword>
<keyword id="KW-0436">Ligase</keyword>
<keyword id="KW-0547">Nucleotide-binding</keyword>
<keyword id="KW-0573">Peptidoglycan synthesis</keyword>
<keyword id="KW-1185">Reference proteome</keyword>
<protein>
    <recommendedName>
        <fullName evidence="1">UDP-N-acetylmuramate--L-alanine ligase</fullName>
        <ecNumber evidence="1">6.3.2.8</ecNumber>
    </recommendedName>
    <alternativeName>
        <fullName evidence="1">UDP-N-acetylmuramoyl-L-alanine synthetase</fullName>
    </alternativeName>
</protein>
<evidence type="ECO:0000255" key="1">
    <source>
        <dbReference type="HAMAP-Rule" id="MF_00046"/>
    </source>
</evidence>
<reference key="1">
    <citation type="journal article" date="2005" name="Nat. Genet.">
        <title>The complete genome sequence of Francisella tularensis, the causative agent of tularemia.</title>
        <authorList>
            <person name="Larsson P."/>
            <person name="Oyston P.C.F."/>
            <person name="Chain P."/>
            <person name="Chu M.C."/>
            <person name="Duffield M."/>
            <person name="Fuxelius H.-H."/>
            <person name="Garcia E."/>
            <person name="Haelltorp G."/>
            <person name="Johansson D."/>
            <person name="Isherwood K.E."/>
            <person name="Karp P.D."/>
            <person name="Larsson E."/>
            <person name="Liu Y."/>
            <person name="Michell S."/>
            <person name="Prior J."/>
            <person name="Prior R."/>
            <person name="Malfatti S."/>
            <person name="Sjoestedt A."/>
            <person name="Svensson K."/>
            <person name="Thompson N."/>
            <person name="Vergez L."/>
            <person name="Wagg J.K."/>
            <person name="Wren B.W."/>
            <person name="Lindler L.E."/>
            <person name="Andersson S.G.E."/>
            <person name="Forsman M."/>
            <person name="Titball R.W."/>
        </authorList>
    </citation>
    <scope>NUCLEOTIDE SEQUENCE [LARGE SCALE GENOMIC DNA]</scope>
    <source>
        <strain>SCHU S4 / Schu 4</strain>
    </source>
</reference>
<organism>
    <name type="scientific">Francisella tularensis subsp. tularensis (strain SCHU S4 / Schu 4)</name>
    <dbReference type="NCBI Taxonomy" id="177416"/>
    <lineage>
        <taxon>Bacteria</taxon>
        <taxon>Pseudomonadati</taxon>
        <taxon>Pseudomonadota</taxon>
        <taxon>Gammaproteobacteria</taxon>
        <taxon>Thiotrichales</taxon>
        <taxon>Francisellaceae</taxon>
        <taxon>Francisella</taxon>
    </lineage>
</organism>